<comment type="similarity">
    <text evidence="1">Belongs to the bacterial ribosomal protein bS16 family.</text>
</comment>
<accession>B5XKW7</accession>
<keyword id="KW-0687">Ribonucleoprotein</keyword>
<keyword id="KW-0689">Ribosomal protein</keyword>
<protein>
    <recommendedName>
        <fullName evidence="1">Small ribosomal subunit protein bS16</fullName>
    </recommendedName>
    <alternativeName>
        <fullName evidence="2">30S ribosomal protein S16</fullName>
    </alternativeName>
</protein>
<evidence type="ECO:0000255" key="1">
    <source>
        <dbReference type="HAMAP-Rule" id="MF_00385"/>
    </source>
</evidence>
<evidence type="ECO:0000305" key="2"/>
<organism>
    <name type="scientific">Streptococcus pyogenes serotype M49 (strain NZ131)</name>
    <dbReference type="NCBI Taxonomy" id="471876"/>
    <lineage>
        <taxon>Bacteria</taxon>
        <taxon>Bacillati</taxon>
        <taxon>Bacillota</taxon>
        <taxon>Bacilli</taxon>
        <taxon>Lactobacillales</taxon>
        <taxon>Streptococcaceae</taxon>
        <taxon>Streptococcus</taxon>
    </lineage>
</organism>
<gene>
    <name evidence="1" type="primary">rpsP</name>
    <name type="ordered locus">Spy49_0659</name>
</gene>
<name>RS16_STRPZ</name>
<reference key="1">
    <citation type="journal article" date="2008" name="J. Bacteriol.">
        <title>Genome sequence of a nephritogenic and highly transformable M49 strain of Streptococcus pyogenes.</title>
        <authorList>
            <person name="McShan W.M."/>
            <person name="Ferretti J.J."/>
            <person name="Karasawa T."/>
            <person name="Suvorov A.N."/>
            <person name="Lin S."/>
            <person name="Qin B."/>
            <person name="Jia H."/>
            <person name="Kenton S."/>
            <person name="Najar F."/>
            <person name="Wu H."/>
            <person name="Scott J."/>
            <person name="Roe B.A."/>
            <person name="Savic D.J."/>
        </authorList>
    </citation>
    <scope>NUCLEOTIDE SEQUENCE [LARGE SCALE GENOMIC DNA]</scope>
    <source>
        <strain>NZ131</strain>
    </source>
</reference>
<dbReference type="EMBL" id="CP000829">
    <property type="protein sequence ID" value="ACI60979.1"/>
    <property type="molecule type" value="Genomic_DNA"/>
</dbReference>
<dbReference type="SMR" id="B5XKW7"/>
<dbReference type="KEGG" id="soz:Spy49_0659"/>
<dbReference type="HOGENOM" id="CLU_100590_5_0_9"/>
<dbReference type="Proteomes" id="UP000001039">
    <property type="component" value="Chromosome"/>
</dbReference>
<dbReference type="GO" id="GO:0005737">
    <property type="term" value="C:cytoplasm"/>
    <property type="evidence" value="ECO:0007669"/>
    <property type="project" value="UniProtKB-ARBA"/>
</dbReference>
<dbReference type="GO" id="GO:0015935">
    <property type="term" value="C:small ribosomal subunit"/>
    <property type="evidence" value="ECO:0007669"/>
    <property type="project" value="TreeGrafter"/>
</dbReference>
<dbReference type="GO" id="GO:0003735">
    <property type="term" value="F:structural constituent of ribosome"/>
    <property type="evidence" value="ECO:0007669"/>
    <property type="project" value="InterPro"/>
</dbReference>
<dbReference type="GO" id="GO:0006412">
    <property type="term" value="P:translation"/>
    <property type="evidence" value="ECO:0007669"/>
    <property type="project" value="UniProtKB-UniRule"/>
</dbReference>
<dbReference type="FunFam" id="3.30.1320.10:FF:000002">
    <property type="entry name" value="30S ribosomal protein S16"/>
    <property type="match status" value="1"/>
</dbReference>
<dbReference type="Gene3D" id="3.30.1320.10">
    <property type="match status" value="1"/>
</dbReference>
<dbReference type="HAMAP" id="MF_00385">
    <property type="entry name" value="Ribosomal_bS16"/>
    <property type="match status" value="1"/>
</dbReference>
<dbReference type="InterPro" id="IPR000307">
    <property type="entry name" value="Ribosomal_bS16"/>
</dbReference>
<dbReference type="InterPro" id="IPR023803">
    <property type="entry name" value="Ribosomal_bS16_dom_sf"/>
</dbReference>
<dbReference type="NCBIfam" id="TIGR00002">
    <property type="entry name" value="S16"/>
    <property type="match status" value="1"/>
</dbReference>
<dbReference type="PANTHER" id="PTHR12919">
    <property type="entry name" value="30S RIBOSOMAL PROTEIN S16"/>
    <property type="match status" value="1"/>
</dbReference>
<dbReference type="PANTHER" id="PTHR12919:SF20">
    <property type="entry name" value="SMALL RIBOSOMAL SUBUNIT PROTEIN BS16M"/>
    <property type="match status" value="1"/>
</dbReference>
<dbReference type="Pfam" id="PF00886">
    <property type="entry name" value="Ribosomal_S16"/>
    <property type="match status" value="1"/>
</dbReference>
<dbReference type="SUPFAM" id="SSF54565">
    <property type="entry name" value="Ribosomal protein S16"/>
    <property type="match status" value="1"/>
</dbReference>
<proteinExistence type="inferred from homology"/>
<feature type="chain" id="PRO_1000196480" description="Small ribosomal subunit protein bS16">
    <location>
        <begin position="1"/>
        <end position="90"/>
    </location>
</feature>
<sequence>MAVKIRLTRMGSKKKPFYRINVADSRAPRDGRFIETVGTYNPLVAENQITIKEDRVLEWLSKGAQPSDTVRNILSKAGVMAKFHDQKFSK</sequence>